<comment type="function">
    <text evidence="6 7 8 9">Odorant receptor which mediates acceptance or avoidance behavior, depending on its substrates. The odorant receptor repertoire encodes a large collection of odor stimuli that vary widely in identity, intensity, and duration. May form a complex with Orco to form odorant-sensing units, providing sensitive and prolonged odorant signaling and calcium permeability. Involved in the behavioral responses to pentyl acetate and pyrazines.</text>
</comment>
<comment type="subunit">
    <text evidence="1">Interacts with Orco. Complexes exist early in the endomembrane system in olfactory sensory neurons (OSNs), coupling these complexes to the conserved ciliary trafficking pathway (By similarity).</text>
</comment>
<comment type="subcellular location">
    <subcellularLocation>
        <location evidence="1">Cell membrane</location>
        <topology evidence="1">Multi-pass membrane protein</topology>
    </subcellularLocation>
</comment>
<comment type="tissue specificity">
    <text evidence="3 4 5">Expressed in 15 cells in the antenna but not the maxillary palp.</text>
</comment>
<comment type="miscellaneous">
    <text>The atypical heteromeric and topological design of the odorant receptors appears to be an insect-specific solution for odor recognition, making the OR/Orco complex an attractive target for the development of highly selective insect repellents to disrupt olfactory-mediated host-seeking behaviors of insect disease vectors. Odor-evoked OR currents are independent of known G-protein-coupled second messenger pathways.</text>
</comment>
<comment type="similarity">
    <text evidence="10">Belongs to the insect chemoreceptor superfamily. Heteromeric odorant receptor channel (TC 1.A.69) family. Or2a subfamily.</text>
</comment>
<gene>
    <name type="primary">Or33b</name>
    <name type="synonym">AN1</name>
    <name type="synonym">DOR33B.2</name>
    <name type="synonym">dor72</name>
    <name type="synonym">Or33B.2</name>
    <name type="ORF">CG16961</name>
</gene>
<evidence type="ECO:0000250" key="1"/>
<evidence type="ECO:0000255" key="2"/>
<evidence type="ECO:0000269" key="3">
    <source>
    </source>
</evidence>
<evidence type="ECO:0000269" key="4">
    <source>
    </source>
</evidence>
<evidence type="ECO:0000269" key="5">
    <source>
    </source>
</evidence>
<evidence type="ECO:0000269" key="6">
    <source>
    </source>
</evidence>
<evidence type="ECO:0000269" key="7">
    <source>
    </source>
</evidence>
<evidence type="ECO:0000269" key="8">
    <source>
    </source>
</evidence>
<evidence type="ECO:0000269" key="9">
    <source>
    </source>
</evidence>
<evidence type="ECO:0000305" key="10"/>
<proteinExistence type="evidence at transcript level"/>
<dbReference type="EMBL" id="AE014134">
    <property type="protein sequence ID" value="AAF53132.1"/>
    <property type="molecule type" value="Genomic_DNA"/>
</dbReference>
<dbReference type="RefSeq" id="NP_523554.1">
    <property type="nucleotide sequence ID" value="NM_078830.1"/>
</dbReference>
<dbReference type="SMR" id="P81915"/>
<dbReference type="FunCoup" id="P81915">
    <property type="interactions" value="45"/>
</dbReference>
<dbReference type="STRING" id="7227.FBpp0079863"/>
<dbReference type="PaxDb" id="7227-FBpp0079863"/>
<dbReference type="EnsemblMetazoa" id="FBtr0080279">
    <property type="protein sequence ID" value="FBpp0079863"/>
    <property type="gene ID" value="FBgn0026391"/>
</dbReference>
<dbReference type="GeneID" id="34602"/>
<dbReference type="KEGG" id="dme:Dmel_CG16961"/>
<dbReference type="AGR" id="FB:FBgn0026391"/>
<dbReference type="CTD" id="34602"/>
<dbReference type="FlyBase" id="FBgn0026391">
    <property type="gene designation" value="Or33b"/>
</dbReference>
<dbReference type="VEuPathDB" id="VectorBase:FBgn0026391"/>
<dbReference type="eggNOG" id="ENOG502TBPZ">
    <property type="taxonomic scope" value="Eukaryota"/>
</dbReference>
<dbReference type="GeneTree" id="ENSGT00540000073151"/>
<dbReference type="HOGENOM" id="CLU_033399_8_1_1"/>
<dbReference type="InParanoid" id="P81915"/>
<dbReference type="OMA" id="YWLYWHL"/>
<dbReference type="OrthoDB" id="5846619at2759"/>
<dbReference type="PhylomeDB" id="P81915"/>
<dbReference type="BioGRID-ORCS" id="34602">
    <property type="hits" value="0 hits in 1 CRISPR screen"/>
</dbReference>
<dbReference type="ChiTaRS" id="Or33b">
    <property type="organism name" value="fly"/>
</dbReference>
<dbReference type="GenomeRNAi" id="34602"/>
<dbReference type="PRO" id="PR:P81915"/>
<dbReference type="Proteomes" id="UP000000803">
    <property type="component" value="Chromosome 2L"/>
</dbReference>
<dbReference type="Bgee" id="FBgn0026391">
    <property type="expression patterns" value="Expressed in adult antennal lobe (Drosophila) and 3 other cell types or tissues"/>
</dbReference>
<dbReference type="GO" id="GO:0032590">
    <property type="term" value="C:dendrite membrane"/>
    <property type="evidence" value="ECO:0000250"/>
    <property type="project" value="FlyBase"/>
</dbReference>
<dbReference type="GO" id="GO:0016020">
    <property type="term" value="C:membrane"/>
    <property type="evidence" value="ECO:0000303"/>
    <property type="project" value="UniProtKB"/>
</dbReference>
<dbReference type="GO" id="GO:0005886">
    <property type="term" value="C:plasma membrane"/>
    <property type="evidence" value="ECO:0007005"/>
    <property type="project" value="FlyBase"/>
</dbReference>
<dbReference type="GO" id="GO:0170020">
    <property type="term" value="F:ionotropic olfactory receptor activity"/>
    <property type="evidence" value="ECO:0007005"/>
    <property type="project" value="FlyBase"/>
</dbReference>
<dbReference type="GO" id="GO:0005549">
    <property type="term" value="F:odorant binding"/>
    <property type="evidence" value="ECO:0000250"/>
    <property type="project" value="FlyBase"/>
</dbReference>
<dbReference type="GO" id="GO:0004984">
    <property type="term" value="F:olfactory receptor activity"/>
    <property type="evidence" value="ECO:0000318"/>
    <property type="project" value="GO_Central"/>
</dbReference>
<dbReference type="GO" id="GO:0050911">
    <property type="term" value="P:detection of chemical stimulus involved in sensory perception of smell"/>
    <property type="evidence" value="ECO:0007005"/>
    <property type="project" value="FlyBase"/>
</dbReference>
<dbReference type="GO" id="GO:0007608">
    <property type="term" value="P:sensory perception of smell"/>
    <property type="evidence" value="ECO:0000270"/>
    <property type="project" value="FlyBase"/>
</dbReference>
<dbReference type="GO" id="GO:0007165">
    <property type="term" value="P:signal transduction"/>
    <property type="evidence" value="ECO:0007669"/>
    <property type="project" value="UniProtKB-KW"/>
</dbReference>
<dbReference type="InterPro" id="IPR004117">
    <property type="entry name" value="7tm6_olfct_rcpt"/>
</dbReference>
<dbReference type="PANTHER" id="PTHR21137">
    <property type="entry name" value="ODORANT RECEPTOR"/>
    <property type="match status" value="1"/>
</dbReference>
<dbReference type="PANTHER" id="PTHR21137:SF35">
    <property type="entry name" value="ODORANT RECEPTOR 19A-RELATED"/>
    <property type="match status" value="1"/>
</dbReference>
<dbReference type="Pfam" id="PF02949">
    <property type="entry name" value="7tm_6"/>
    <property type="match status" value="1"/>
</dbReference>
<sequence length="379" mass="43633">MDLKPRVIRSEDIYRTYWLYWHLLGLESNFFLNRLLDLVITIFVTIWYPIHLILGLFMERSLGDVCKGLPITAACFFASFKFICFRFKLSEIKEIEILFKELDQRALSREECEFFNQNTRREANFIWKSFIVAYGLSNISAIASVLFGGGHKLLYPAWFPYDVQATELIFWLSVTYQIAGVSLAILQNLANDSYPPMTFCVVAGHVRLLAMRLSRIGQGPEETIYLTGKQLIESIEDHRKLMKIVELLRSTMNISQLGQFISSGVNISITLVNILFFADNNFAITYYGVYFLSMVLELFPCCYYGTLISVEMNQLTYAIYSSNWMSMNRSYSRILLIFMQLTLAEVQIKAGGMIGIGMNAFFATVRLAYSFFTLAMSLR</sequence>
<organism>
    <name type="scientific">Drosophila melanogaster</name>
    <name type="common">Fruit fly</name>
    <dbReference type="NCBI Taxonomy" id="7227"/>
    <lineage>
        <taxon>Eukaryota</taxon>
        <taxon>Metazoa</taxon>
        <taxon>Ecdysozoa</taxon>
        <taxon>Arthropoda</taxon>
        <taxon>Hexapoda</taxon>
        <taxon>Insecta</taxon>
        <taxon>Pterygota</taxon>
        <taxon>Neoptera</taxon>
        <taxon>Endopterygota</taxon>
        <taxon>Diptera</taxon>
        <taxon>Brachycera</taxon>
        <taxon>Muscomorpha</taxon>
        <taxon>Ephydroidea</taxon>
        <taxon>Drosophilidae</taxon>
        <taxon>Drosophila</taxon>
        <taxon>Sophophora</taxon>
    </lineage>
</organism>
<protein>
    <recommendedName>
        <fullName>Odorant receptor 33b</fullName>
    </recommendedName>
</protein>
<feature type="chain" id="PRO_0000174239" description="Odorant receptor 33b">
    <location>
        <begin position="1"/>
        <end position="379"/>
    </location>
</feature>
<feature type="topological domain" description="Cytoplasmic" evidence="2">
    <location>
        <begin position="1"/>
        <end position="37"/>
    </location>
</feature>
<feature type="transmembrane region" description="Helical; Name=1" evidence="2">
    <location>
        <begin position="38"/>
        <end position="58"/>
    </location>
</feature>
<feature type="topological domain" description="Extracellular" evidence="2">
    <location>
        <begin position="59"/>
        <end position="64"/>
    </location>
</feature>
<feature type="transmembrane region" description="Helical; Name=2" evidence="2">
    <location>
        <begin position="65"/>
        <end position="85"/>
    </location>
</feature>
<feature type="topological domain" description="Cytoplasmic" evidence="2">
    <location>
        <begin position="86"/>
        <end position="129"/>
    </location>
</feature>
<feature type="transmembrane region" description="Helical; Name=3" evidence="2">
    <location>
        <begin position="130"/>
        <end position="150"/>
    </location>
</feature>
<feature type="topological domain" description="Extracellular" evidence="2">
    <location>
        <begin position="151"/>
        <end position="165"/>
    </location>
</feature>
<feature type="transmembrane region" description="Helical; Name=4" evidence="2">
    <location>
        <begin position="166"/>
        <end position="186"/>
    </location>
</feature>
<feature type="topological domain" description="Cytoplasmic" evidence="2">
    <location>
        <begin position="187"/>
        <end position="256"/>
    </location>
</feature>
<feature type="transmembrane region" description="Helical; Name=5" evidence="2">
    <location>
        <begin position="257"/>
        <end position="277"/>
    </location>
</feature>
<feature type="topological domain" description="Extracellular" evidence="2">
    <location>
        <begin position="278"/>
        <end position="281"/>
    </location>
</feature>
<feature type="transmembrane region" description="Helical; Name=6" evidence="2">
    <location>
        <begin position="282"/>
        <end position="302"/>
    </location>
</feature>
<feature type="topological domain" description="Cytoplasmic" evidence="2">
    <location>
        <begin position="303"/>
        <end position="355"/>
    </location>
</feature>
<feature type="transmembrane region" description="Helical; Name=7" evidence="2">
    <location>
        <begin position="356"/>
        <end position="376"/>
    </location>
</feature>
<feature type="topological domain" description="Extracellular" evidence="2">
    <location>
        <begin position="377"/>
        <end position="379"/>
    </location>
</feature>
<keyword id="KW-1003">Cell membrane</keyword>
<keyword id="KW-0472">Membrane</keyword>
<keyword id="KW-0552">Olfaction</keyword>
<keyword id="KW-0675">Receptor</keyword>
<keyword id="KW-1185">Reference proteome</keyword>
<keyword id="KW-0716">Sensory transduction</keyword>
<keyword id="KW-0807">Transducer</keyword>
<keyword id="KW-0812">Transmembrane</keyword>
<keyword id="KW-1133">Transmembrane helix</keyword>
<accession>P81915</accession>
<reference key="1">
    <citation type="journal article" date="1999" name="Genomics">
        <title>Identification of candidate Drosophila olfactory receptors from genomic DNA sequence.</title>
        <authorList>
            <person name="Gao Q."/>
            <person name="Chess A."/>
        </authorList>
    </citation>
    <scope>NUCLEOTIDE SEQUENCE [GENOMIC DNA]</scope>
</reference>
<reference key="2">
    <citation type="journal article" date="2000" name="Science">
        <title>The genome sequence of Drosophila melanogaster.</title>
        <authorList>
            <person name="Adams M.D."/>
            <person name="Celniker S.E."/>
            <person name="Holt R.A."/>
            <person name="Evans C.A."/>
            <person name="Gocayne J.D."/>
            <person name="Amanatides P.G."/>
            <person name="Scherer S.E."/>
            <person name="Li P.W."/>
            <person name="Hoskins R.A."/>
            <person name="Galle R.F."/>
            <person name="George R.A."/>
            <person name="Lewis S.E."/>
            <person name="Richards S."/>
            <person name="Ashburner M."/>
            <person name="Henderson S.N."/>
            <person name="Sutton G.G."/>
            <person name="Wortman J.R."/>
            <person name="Yandell M.D."/>
            <person name="Zhang Q."/>
            <person name="Chen L.X."/>
            <person name="Brandon R.C."/>
            <person name="Rogers Y.-H.C."/>
            <person name="Blazej R.G."/>
            <person name="Champe M."/>
            <person name="Pfeiffer B.D."/>
            <person name="Wan K.H."/>
            <person name="Doyle C."/>
            <person name="Baxter E.G."/>
            <person name="Helt G."/>
            <person name="Nelson C.R."/>
            <person name="Miklos G.L.G."/>
            <person name="Abril J.F."/>
            <person name="Agbayani A."/>
            <person name="An H.-J."/>
            <person name="Andrews-Pfannkoch C."/>
            <person name="Baldwin D."/>
            <person name="Ballew R.M."/>
            <person name="Basu A."/>
            <person name="Baxendale J."/>
            <person name="Bayraktaroglu L."/>
            <person name="Beasley E.M."/>
            <person name="Beeson K.Y."/>
            <person name="Benos P.V."/>
            <person name="Berman B.P."/>
            <person name="Bhandari D."/>
            <person name="Bolshakov S."/>
            <person name="Borkova D."/>
            <person name="Botchan M.R."/>
            <person name="Bouck J."/>
            <person name="Brokstein P."/>
            <person name="Brottier P."/>
            <person name="Burtis K.C."/>
            <person name="Busam D.A."/>
            <person name="Butler H."/>
            <person name="Cadieu E."/>
            <person name="Center A."/>
            <person name="Chandra I."/>
            <person name="Cherry J.M."/>
            <person name="Cawley S."/>
            <person name="Dahlke C."/>
            <person name="Davenport L.B."/>
            <person name="Davies P."/>
            <person name="de Pablos B."/>
            <person name="Delcher A."/>
            <person name="Deng Z."/>
            <person name="Mays A.D."/>
            <person name="Dew I."/>
            <person name="Dietz S.M."/>
            <person name="Dodson K."/>
            <person name="Doup L.E."/>
            <person name="Downes M."/>
            <person name="Dugan-Rocha S."/>
            <person name="Dunkov B.C."/>
            <person name="Dunn P."/>
            <person name="Durbin K.J."/>
            <person name="Evangelista C.C."/>
            <person name="Ferraz C."/>
            <person name="Ferriera S."/>
            <person name="Fleischmann W."/>
            <person name="Fosler C."/>
            <person name="Gabrielian A.E."/>
            <person name="Garg N.S."/>
            <person name="Gelbart W.M."/>
            <person name="Glasser K."/>
            <person name="Glodek A."/>
            <person name="Gong F."/>
            <person name="Gorrell J.H."/>
            <person name="Gu Z."/>
            <person name="Guan P."/>
            <person name="Harris M."/>
            <person name="Harris N.L."/>
            <person name="Harvey D.A."/>
            <person name="Heiman T.J."/>
            <person name="Hernandez J.R."/>
            <person name="Houck J."/>
            <person name="Hostin D."/>
            <person name="Houston K.A."/>
            <person name="Howland T.J."/>
            <person name="Wei M.-H."/>
            <person name="Ibegwam C."/>
            <person name="Jalali M."/>
            <person name="Kalush F."/>
            <person name="Karpen G.H."/>
            <person name="Ke Z."/>
            <person name="Kennison J.A."/>
            <person name="Ketchum K.A."/>
            <person name="Kimmel B.E."/>
            <person name="Kodira C.D."/>
            <person name="Kraft C.L."/>
            <person name="Kravitz S."/>
            <person name="Kulp D."/>
            <person name="Lai Z."/>
            <person name="Lasko P."/>
            <person name="Lei Y."/>
            <person name="Levitsky A.A."/>
            <person name="Li J.H."/>
            <person name="Li Z."/>
            <person name="Liang Y."/>
            <person name="Lin X."/>
            <person name="Liu X."/>
            <person name="Mattei B."/>
            <person name="McIntosh T.C."/>
            <person name="McLeod M.P."/>
            <person name="McPherson D."/>
            <person name="Merkulov G."/>
            <person name="Milshina N.V."/>
            <person name="Mobarry C."/>
            <person name="Morris J."/>
            <person name="Moshrefi A."/>
            <person name="Mount S.M."/>
            <person name="Moy M."/>
            <person name="Murphy B."/>
            <person name="Murphy L."/>
            <person name="Muzny D.M."/>
            <person name="Nelson D.L."/>
            <person name="Nelson D.R."/>
            <person name="Nelson K.A."/>
            <person name="Nixon K."/>
            <person name="Nusskern D.R."/>
            <person name="Pacleb J.M."/>
            <person name="Palazzolo M."/>
            <person name="Pittman G.S."/>
            <person name="Pan S."/>
            <person name="Pollard J."/>
            <person name="Puri V."/>
            <person name="Reese M.G."/>
            <person name="Reinert K."/>
            <person name="Remington K."/>
            <person name="Saunders R.D.C."/>
            <person name="Scheeler F."/>
            <person name="Shen H."/>
            <person name="Shue B.C."/>
            <person name="Siden-Kiamos I."/>
            <person name="Simpson M."/>
            <person name="Skupski M.P."/>
            <person name="Smith T.J."/>
            <person name="Spier E."/>
            <person name="Spradling A.C."/>
            <person name="Stapleton M."/>
            <person name="Strong R."/>
            <person name="Sun E."/>
            <person name="Svirskas R."/>
            <person name="Tector C."/>
            <person name="Turner R."/>
            <person name="Venter E."/>
            <person name="Wang A.H."/>
            <person name="Wang X."/>
            <person name="Wang Z.-Y."/>
            <person name="Wassarman D.A."/>
            <person name="Weinstock G.M."/>
            <person name="Weissenbach J."/>
            <person name="Williams S.M."/>
            <person name="Woodage T."/>
            <person name="Worley K.C."/>
            <person name="Wu D."/>
            <person name="Yang S."/>
            <person name="Yao Q.A."/>
            <person name="Ye J."/>
            <person name="Yeh R.-F."/>
            <person name="Zaveri J.S."/>
            <person name="Zhan M."/>
            <person name="Zhang G."/>
            <person name="Zhao Q."/>
            <person name="Zheng L."/>
            <person name="Zheng X.H."/>
            <person name="Zhong F.N."/>
            <person name="Zhong W."/>
            <person name="Zhou X."/>
            <person name="Zhu S.C."/>
            <person name="Zhu X."/>
            <person name="Smith H.O."/>
            <person name="Gibbs R.A."/>
            <person name="Myers E.W."/>
            <person name="Rubin G.M."/>
            <person name="Venter J.C."/>
        </authorList>
    </citation>
    <scope>NUCLEOTIDE SEQUENCE [LARGE SCALE GENOMIC DNA]</scope>
    <source>
        <strain>Berkeley</strain>
    </source>
</reference>
<reference key="3">
    <citation type="journal article" date="2002" name="Genome Biol.">
        <title>Annotation of the Drosophila melanogaster euchromatic genome: a systematic review.</title>
        <authorList>
            <person name="Misra S."/>
            <person name="Crosby M.A."/>
            <person name="Mungall C.J."/>
            <person name="Matthews B.B."/>
            <person name="Campbell K.S."/>
            <person name="Hradecky P."/>
            <person name="Huang Y."/>
            <person name="Kaminker J.S."/>
            <person name="Millburn G.H."/>
            <person name="Prochnik S.E."/>
            <person name="Smith C.D."/>
            <person name="Tupy J.L."/>
            <person name="Whitfield E.J."/>
            <person name="Bayraktaroglu L."/>
            <person name="Berman B.P."/>
            <person name="Bettencourt B.R."/>
            <person name="Celniker S.E."/>
            <person name="de Grey A.D.N.J."/>
            <person name="Drysdale R.A."/>
            <person name="Harris N.L."/>
            <person name="Richter J."/>
            <person name="Russo S."/>
            <person name="Schroeder A.J."/>
            <person name="Shu S.Q."/>
            <person name="Stapleton M."/>
            <person name="Yamada C."/>
            <person name="Ashburner M."/>
            <person name="Gelbart W.M."/>
            <person name="Rubin G.M."/>
            <person name="Lewis S.E."/>
        </authorList>
    </citation>
    <scope>GENOME REANNOTATION</scope>
    <source>
        <strain>Berkeley</strain>
    </source>
</reference>
<reference key="4">
    <citation type="journal article" date="1999" name="Neuron">
        <title>A novel family of divergent seven-transmembrane proteins: candidate odorant receptors in Drosophila.</title>
        <authorList>
            <person name="Clyne P.J."/>
            <person name="Warr C.G."/>
            <person name="Freeman M.R."/>
            <person name="Lessing D."/>
            <person name="Kim J."/>
            <person name="Carlson J.R."/>
        </authorList>
    </citation>
    <scope>IDENTIFICATION</scope>
    <scope>TISSUE SPECIFICITY</scope>
</reference>
<reference key="5">
    <citation type="journal article" date="1999" name="Cell">
        <title>A spatial map of olfactory receptor expression in the Drosophila antenna.</title>
        <authorList>
            <person name="Vosshall L.B."/>
            <person name="Amrein H."/>
            <person name="Morozov P.S."/>
            <person name="Rzhetsky A."/>
            <person name="Axel R."/>
        </authorList>
    </citation>
    <scope>IDENTIFICATION</scope>
    <scope>TISSUE SPECIFICITY</scope>
    <source>
        <strain>Oregon-R</strain>
        <tissue>Antenna</tissue>
    </source>
</reference>
<reference key="6">
    <citation type="journal article" date="2000" name="Cell">
        <title>An olfactory sensory map in the fly brain.</title>
        <authorList>
            <person name="Vosshall L.B."/>
            <person name="Wong A.M."/>
            <person name="Axel R."/>
        </authorList>
    </citation>
    <scope>TISSUE SPECIFICITY</scope>
</reference>
<reference key="7">
    <citation type="journal article" date="2006" name="Cell">
        <title>Coding of odors by a receptor repertoire.</title>
        <authorList>
            <person name="Hallem E.A."/>
            <person name="Carlson J.R."/>
        </authorList>
    </citation>
    <scope>FUNCTION</scope>
</reference>
<reference key="8">
    <citation type="journal article" date="2010" name="Front. Behav. Neurosci.">
        <title>Optogenetically induced olfactory stimulation in Drosophila larvae reveals the neuronal basis of odor-aversion behavior.</title>
        <authorList>
            <person name="Bellmann D."/>
            <person name="Richardt A."/>
            <person name="Freyberger R."/>
            <person name="Nuwal N."/>
            <person name="Schwarzel M."/>
            <person name="Fiala A."/>
            <person name="Stortkuhl K.F."/>
        </authorList>
    </citation>
    <scope>FUNCTION</scope>
</reference>
<reference key="9">
    <citation type="journal article" date="2011" name="J. Neurosci.">
        <title>Similar odorants elicit different behavioral and physiological responses, some supersustained.</title>
        <authorList>
            <person name="Montague S.A."/>
            <person name="Mathew D."/>
            <person name="Carlson J.R."/>
        </authorList>
    </citation>
    <scope>FUNCTION</scope>
</reference>
<reference key="10">
    <citation type="journal article" date="2011" name="PLoS ONE">
        <title>Modeling peripheral olfactory coding in Drosophila larvae.</title>
        <authorList>
            <person name="Hoare D.J."/>
            <person name="Humble J."/>
            <person name="Jin D."/>
            <person name="Gilding N."/>
            <person name="Petersen R."/>
            <person name="Cobb M."/>
            <person name="McCrohan C."/>
        </authorList>
    </citation>
    <scope>FUNCTION</scope>
</reference>
<name>OR33B_DROME</name>